<sequence>MESLMPWDARDTMSLRTEFVLFASQDGANIRSLCRRFGISPATGYKWLQRWAQEGAAGLQDRPRIPHHSPNRSSDDITALLRMAHDRHERWGARKIKRWLEDQGHTMPAFSTVHNLMARHGLLPGASPGIPATGRFEHDAPNRLWQMDFKGHFPFGGGRCHPLTLLDDHSRFSLCLAHCTDERRETVQQQLVSVFERYGLPDRMTMDNGSPWGDTTGTWTALELWLMRLGIRVGHSRPYHPQTQGKLERFHRSLKAEVLQGKWFADSGELQRAFDHWRTVYNLERPHEALDMAVPGSRYQPSARQYSGNTTPPEYDEGVMVRKVDISGKLSVKGVSLSAGKAFRGERVGLKEMQEDGSYEVWWYSTKVGVIDLKKKSITMGKGC</sequence>
<keyword id="KW-1185">Reference proteome</keyword>
<comment type="induction">
    <text evidence="2">Expression is repressed by the transcriptional regulator XynR.</text>
</comment>
<comment type="sequence caution" evidence="3">
    <conflict type="frameshift">
        <sequence resource="EMBL" id="L20943"/>
    </conflict>
</comment>
<organism>
    <name type="scientific">Escherichia coli (strain K12)</name>
    <dbReference type="NCBI Taxonomy" id="83333"/>
    <lineage>
        <taxon>Bacteria</taxon>
        <taxon>Pseudomonadati</taxon>
        <taxon>Pseudomonadota</taxon>
        <taxon>Gammaproteobacteria</taxon>
        <taxon>Enterobacterales</taxon>
        <taxon>Enterobacteriaceae</taxon>
        <taxon>Escherichia</taxon>
    </lineage>
</organism>
<accession>P37007</accession>
<accession>P77312</accession>
<name>YAGA_ECOLI</name>
<protein>
    <recommendedName>
        <fullName>Uncharacterized protein YagA</fullName>
    </recommendedName>
</protein>
<evidence type="ECO:0000255" key="1">
    <source>
        <dbReference type="PROSITE-ProRule" id="PRU00457"/>
    </source>
</evidence>
<evidence type="ECO:0000269" key="2">
    <source>
    </source>
</evidence>
<evidence type="ECO:0000305" key="3"/>
<proteinExistence type="evidence at transcript level"/>
<gene>
    <name type="primary">yagA</name>
    <name type="ordered locus">b0267</name>
    <name type="ordered locus">JW0260</name>
</gene>
<dbReference type="EMBL" id="U70214">
    <property type="protein sequence ID" value="AAB08688.1"/>
    <property type="molecule type" value="Genomic_DNA"/>
</dbReference>
<dbReference type="EMBL" id="U00096">
    <property type="protein sequence ID" value="AAC73370.1"/>
    <property type="molecule type" value="Genomic_DNA"/>
</dbReference>
<dbReference type="EMBL" id="AP009048">
    <property type="protein sequence ID" value="BAA77933.2"/>
    <property type="molecule type" value="Genomic_DNA"/>
</dbReference>
<dbReference type="EMBL" id="L20943">
    <property type="status" value="NOT_ANNOTATED_CDS"/>
    <property type="molecule type" value="Unassigned_DNA"/>
</dbReference>
<dbReference type="PIR" id="C64752">
    <property type="entry name" value="C64752"/>
</dbReference>
<dbReference type="RefSeq" id="NP_414801.1">
    <property type="nucleotide sequence ID" value="NC_000913.3"/>
</dbReference>
<dbReference type="RefSeq" id="WP_010723086.1">
    <property type="nucleotide sequence ID" value="NZ_LN832404.1"/>
</dbReference>
<dbReference type="SMR" id="P37007"/>
<dbReference type="BioGRID" id="4261543">
    <property type="interactions" value="49"/>
</dbReference>
<dbReference type="DIP" id="DIP-11230N"/>
<dbReference type="FunCoup" id="P37007">
    <property type="interactions" value="51"/>
</dbReference>
<dbReference type="IntAct" id="P37007">
    <property type="interactions" value="6"/>
</dbReference>
<dbReference type="STRING" id="511145.b0267"/>
<dbReference type="PaxDb" id="511145-b0267"/>
<dbReference type="EnsemblBacteria" id="AAC73370">
    <property type="protein sequence ID" value="AAC73370"/>
    <property type="gene ID" value="b0267"/>
</dbReference>
<dbReference type="GeneID" id="944937"/>
<dbReference type="KEGG" id="ecj:JW0260"/>
<dbReference type="KEGG" id="eco:b0267"/>
<dbReference type="PATRIC" id="fig|511145.12.peg.271"/>
<dbReference type="EchoBASE" id="EB2242"/>
<dbReference type="eggNOG" id="COG2801">
    <property type="taxonomic scope" value="Bacteria"/>
</dbReference>
<dbReference type="eggNOG" id="COG3415">
    <property type="taxonomic scope" value="Bacteria"/>
</dbReference>
<dbReference type="HOGENOM" id="CLU_027402_15_3_6"/>
<dbReference type="InParanoid" id="P37007"/>
<dbReference type="OMA" id="CSHATLE"/>
<dbReference type="OrthoDB" id="9774685at2"/>
<dbReference type="PhylomeDB" id="P37007"/>
<dbReference type="BioCyc" id="EcoCyc:EG12338-MONOMER"/>
<dbReference type="PRO" id="PR:P37007"/>
<dbReference type="Proteomes" id="UP000000625">
    <property type="component" value="Chromosome"/>
</dbReference>
<dbReference type="GO" id="GO:0005829">
    <property type="term" value="C:cytosol"/>
    <property type="evidence" value="ECO:0000314"/>
    <property type="project" value="EcoCyc"/>
</dbReference>
<dbReference type="GO" id="GO:0003676">
    <property type="term" value="F:nucleic acid binding"/>
    <property type="evidence" value="ECO:0007669"/>
    <property type="project" value="InterPro"/>
</dbReference>
<dbReference type="GO" id="GO:0015074">
    <property type="term" value="P:DNA integration"/>
    <property type="evidence" value="ECO:0007669"/>
    <property type="project" value="InterPro"/>
</dbReference>
<dbReference type="FunFam" id="3.30.420.10:FF:000220">
    <property type="entry name" value="ISDet2, transposase orfB"/>
    <property type="match status" value="1"/>
</dbReference>
<dbReference type="Gene3D" id="3.30.420.10">
    <property type="entry name" value="Ribonuclease H-like superfamily/Ribonuclease H"/>
    <property type="match status" value="1"/>
</dbReference>
<dbReference type="InterPro" id="IPR009057">
    <property type="entry name" value="Homeodomain-like_sf"/>
</dbReference>
<dbReference type="InterPro" id="IPR001584">
    <property type="entry name" value="Integrase_cat-core"/>
</dbReference>
<dbReference type="InterPro" id="IPR047656">
    <property type="entry name" value="IS481-like_transpos"/>
</dbReference>
<dbReference type="InterPro" id="IPR012337">
    <property type="entry name" value="RNaseH-like_sf"/>
</dbReference>
<dbReference type="InterPro" id="IPR036397">
    <property type="entry name" value="RNaseH_sf"/>
</dbReference>
<dbReference type="NCBIfam" id="NF033577">
    <property type="entry name" value="transpos_IS481"/>
    <property type="match status" value="1"/>
</dbReference>
<dbReference type="PANTHER" id="PTHR35004:SF6">
    <property type="entry name" value="TRANSPOSASE"/>
    <property type="match status" value="1"/>
</dbReference>
<dbReference type="PANTHER" id="PTHR35004">
    <property type="entry name" value="TRANSPOSASE RV3428C-RELATED"/>
    <property type="match status" value="1"/>
</dbReference>
<dbReference type="Pfam" id="PF13565">
    <property type="entry name" value="HTH_32"/>
    <property type="match status" value="1"/>
</dbReference>
<dbReference type="Pfam" id="PF00665">
    <property type="entry name" value="rve"/>
    <property type="match status" value="1"/>
</dbReference>
<dbReference type="SUPFAM" id="SSF46689">
    <property type="entry name" value="Homeodomain-like"/>
    <property type="match status" value="1"/>
</dbReference>
<dbReference type="SUPFAM" id="SSF53098">
    <property type="entry name" value="Ribonuclease H-like"/>
    <property type="match status" value="1"/>
</dbReference>
<dbReference type="PROSITE" id="PS50994">
    <property type="entry name" value="INTEGRASE"/>
    <property type="match status" value="1"/>
</dbReference>
<reference key="1">
    <citation type="submission" date="1996-02" db="EMBL/GenBank/DDBJ databases">
        <title>Systematic sequencing of the Escherichia coli genome: analysis of the 4.0 - 6.0 min (189,987 - 281,416bp) region.</title>
        <authorList>
            <person name="Takemoto K."/>
            <person name="Mori H."/>
            <person name="Murayama N."/>
            <person name="Kataoka K."/>
            <person name="Yano M."/>
            <person name="Itoh T."/>
            <person name="Yamamoto Y."/>
            <person name="Inokuchi H."/>
            <person name="Miki T."/>
            <person name="Hatada E."/>
            <person name="Fukuda R."/>
            <person name="Ichihara S."/>
            <person name="Mizuno T."/>
            <person name="Makino K."/>
            <person name="Nakata A."/>
            <person name="Yura T."/>
            <person name="Sampei G."/>
            <person name="Mizobuchi K."/>
        </authorList>
    </citation>
    <scope>NUCLEOTIDE SEQUENCE [LARGE SCALE GENOMIC DNA]</scope>
    <source>
        <strain>K12 / W3110 / ATCC 27325 / DSM 5911</strain>
    </source>
</reference>
<reference key="2">
    <citation type="submission" date="1997-01" db="EMBL/GenBank/DDBJ databases">
        <title>Sequence of minutes 4-25 of Escherichia coli.</title>
        <authorList>
            <person name="Chung E."/>
            <person name="Allen E."/>
            <person name="Araujo R."/>
            <person name="Aparicio A.M."/>
            <person name="Davis K."/>
            <person name="Duncan M."/>
            <person name="Federspiel N."/>
            <person name="Hyman R."/>
            <person name="Kalman S."/>
            <person name="Komp C."/>
            <person name="Kurdi O."/>
            <person name="Lew H."/>
            <person name="Lin D."/>
            <person name="Namath A."/>
            <person name="Oefner P."/>
            <person name="Roberts D."/>
            <person name="Schramm S."/>
            <person name="Davis R.W."/>
        </authorList>
    </citation>
    <scope>NUCLEOTIDE SEQUENCE [LARGE SCALE GENOMIC DNA]</scope>
    <source>
        <strain>K12 / MG1655 / ATCC 47076</strain>
    </source>
</reference>
<reference key="3">
    <citation type="journal article" date="1997" name="Science">
        <title>The complete genome sequence of Escherichia coli K-12.</title>
        <authorList>
            <person name="Blattner F.R."/>
            <person name="Plunkett G. III"/>
            <person name="Bloch C.A."/>
            <person name="Perna N.T."/>
            <person name="Burland V."/>
            <person name="Riley M."/>
            <person name="Collado-Vides J."/>
            <person name="Glasner J.D."/>
            <person name="Rode C.K."/>
            <person name="Mayhew G.F."/>
            <person name="Gregor J."/>
            <person name="Davis N.W."/>
            <person name="Kirkpatrick H.A."/>
            <person name="Goeden M.A."/>
            <person name="Rose D.J."/>
            <person name="Mau B."/>
            <person name="Shao Y."/>
        </authorList>
    </citation>
    <scope>NUCLEOTIDE SEQUENCE [LARGE SCALE GENOMIC DNA]</scope>
    <source>
        <strain>K12 / MG1655 / ATCC 47076</strain>
    </source>
</reference>
<reference key="4">
    <citation type="journal article" date="2006" name="Mol. Syst. Biol.">
        <title>Highly accurate genome sequences of Escherichia coli K-12 strains MG1655 and W3110.</title>
        <authorList>
            <person name="Hayashi K."/>
            <person name="Morooka N."/>
            <person name="Yamamoto Y."/>
            <person name="Fujita K."/>
            <person name="Isono K."/>
            <person name="Choi S."/>
            <person name="Ohtsubo E."/>
            <person name="Baba T."/>
            <person name="Wanner B.L."/>
            <person name="Mori H."/>
            <person name="Horiuchi T."/>
        </authorList>
    </citation>
    <scope>NUCLEOTIDE SEQUENCE [LARGE SCALE GENOMIC DNA]</scope>
    <scope>SEQUENCE REVISION TO 261-271</scope>
    <source>
        <strain>K12 / W3110 / ATCC 27325 / DSM 5911</strain>
    </source>
</reference>
<reference key="5">
    <citation type="journal article" date="1994" name="J. Bacteriol.">
        <title>The delta (argF-lacZ)205(U169) deletion greatly enhances resistance to hydrogen peroxide in stationary-phase Escherichia coli.</title>
        <authorList>
            <person name="Volkert M.R."/>
            <person name="Loewen P.C."/>
            <person name="Switala J."/>
            <person name="Crowley D."/>
            <person name="Conley M."/>
        </authorList>
    </citation>
    <scope>NUCLEOTIDE SEQUENCE [GENOMIC DNA] OF 245-384</scope>
</reference>
<reference key="6">
    <citation type="unpublished observations" date="1994-04">
        <authorList>
            <person name="Rudd K.E."/>
        </authorList>
    </citation>
    <scope>IDENTIFICATION</scope>
</reference>
<reference key="7">
    <citation type="journal article" date="2017" name="FEMS Microbiol. Lett.">
        <title>Regulatory role of XynR (YagI) in catabolism of xylonate in Escherichia coli K-12.</title>
        <authorList>
            <person name="Shimada T."/>
            <person name="Momiyama E."/>
            <person name="Yamanaka Y."/>
            <person name="Watanabe H."/>
            <person name="Yamamoto K."/>
            <person name="Ishihama A."/>
        </authorList>
    </citation>
    <scope>INDUCTION</scope>
</reference>
<feature type="chain" id="PRO_0000168554" description="Uncharacterized protein YagA">
    <location>
        <begin position="1"/>
        <end position="384"/>
    </location>
</feature>
<feature type="domain" description="Integrase catalytic" evidence="1">
    <location>
        <begin position="137"/>
        <end position="303"/>
    </location>
</feature>